<proteinExistence type="inferred from homology"/>
<organism>
    <name type="scientific">Xanthomonas campestris pv. campestris (strain ATCC 33913 / DSM 3586 / NCPPB 528 / LMG 568 / P 25)</name>
    <dbReference type="NCBI Taxonomy" id="190485"/>
    <lineage>
        <taxon>Bacteria</taxon>
        <taxon>Pseudomonadati</taxon>
        <taxon>Pseudomonadota</taxon>
        <taxon>Gammaproteobacteria</taxon>
        <taxon>Lysobacterales</taxon>
        <taxon>Lysobacteraceae</taxon>
        <taxon>Xanthomonas</taxon>
    </lineage>
</organism>
<sequence length="172" mass="18633">MARGINKVILVGNLGNDPDTKYTQAGMAITRVSLATTSMRKDREGNNQERTEWHRVVFFGKLGEIAGEYLRKGSQVYVEGELRYDKYTGQDGVEKYSTDIVANEMQMLGGRGEGGGGGGMGGDRPQRTQAPRQQQGGGGGGGGQDYAPRRQQPAQQQSAPPMDDFADDDIPF</sequence>
<comment type="function">
    <text evidence="1">Plays an important role in DNA replication, recombination and repair. Binds to ssDNA and to an array of partner proteins to recruit them to their sites of action during DNA metabolism.</text>
</comment>
<comment type="subunit">
    <text evidence="1">Homotetramer.</text>
</comment>
<evidence type="ECO:0000255" key="1">
    <source>
        <dbReference type="HAMAP-Rule" id="MF_00984"/>
    </source>
</evidence>
<evidence type="ECO:0000256" key="2">
    <source>
        <dbReference type="SAM" id="MobiDB-lite"/>
    </source>
</evidence>
<feature type="chain" id="PRO_0000096142" description="Single-stranded DNA-binding protein">
    <location>
        <begin position="1"/>
        <end position="172"/>
    </location>
</feature>
<feature type="domain" description="SSB" evidence="1">
    <location>
        <begin position="5"/>
        <end position="109"/>
    </location>
</feature>
<feature type="region of interest" description="Disordered" evidence="2">
    <location>
        <begin position="107"/>
        <end position="172"/>
    </location>
</feature>
<feature type="short sequence motif" description="Important for interaction with partner proteins" evidence="1">
    <location>
        <begin position="167"/>
        <end position="172"/>
    </location>
</feature>
<feature type="compositionally biased region" description="Gly residues" evidence="2">
    <location>
        <begin position="109"/>
        <end position="122"/>
    </location>
</feature>
<feature type="compositionally biased region" description="Gly residues" evidence="2">
    <location>
        <begin position="135"/>
        <end position="144"/>
    </location>
</feature>
<feature type="compositionally biased region" description="Low complexity" evidence="2">
    <location>
        <begin position="149"/>
        <end position="161"/>
    </location>
</feature>
<protein>
    <recommendedName>
        <fullName evidence="1">Single-stranded DNA-binding protein</fullName>
        <shortName evidence="1">SSB</shortName>
    </recommendedName>
</protein>
<name>SSB_XANCP</name>
<dbReference type="EMBL" id="AE008922">
    <property type="protein sequence ID" value="AAM42007.1"/>
    <property type="molecule type" value="Genomic_DNA"/>
</dbReference>
<dbReference type="RefSeq" id="NP_638083.1">
    <property type="nucleotide sequence ID" value="NC_003902.1"/>
</dbReference>
<dbReference type="RefSeq" id="WP_011037865.1">
    <property type="nucleotide sequence ID" value="NC_003902.1"/>
</dbReference>
<dbReference type="SMR" id="Q8P778"/>
<dbReference type="STRING" id="190485.XCC2735"/>
<dbReference type="EnsemblBacteria" id="AAM42007">
    <property type="protein sequence ID" value="AAM42007"/>
    <property type="gene ID" value="XCC2735"/>
</dbReference>
<dbReference type="KEGG" id="xcc:XCC2735"/>
<dbReference type="PATRIC" id="fig|190485.4.peg.2920"/>
<dbReference type="eggNOG" id="COG0629">
    <property type="taxonomic scope" value="Bacteria"/>
</dbReference>
<dbReference type="HOGENOM" id="CLU_078758_0_2_6"/>
<dbReference type="OrthoDB" id="9809878at2"/>
<dbReference type="Proteomes" id="UP000001010">
    <property type="component" value="Chromosome"/>
</dbReference>
<dbReference type="GO" id="GO:0009295">
    <property type="term" value="C:nucleoid"/>
    <property type="evidence" value="ECO:0000318"/>
    <property type="project" value="GO_Central"/>
</dbReference>
<dbReference type="GO" id="GO:0008047">
    <property type="term" value="F:enzyme activator activity"/>
    <property type="evidence" value="ECO:0000318"/>
    <property type="project" value="GO_Central"/>
</dbReference>
<dbReference type="GO" id="GO:0003697">
    <property type="term" value="F:single-stranded DNA binding"/>
    <property type="evidence" value="ECO:0000318"/>
    <property type="project" value="GO_Central"/>
</dbReference>
<dbReference type="GO" id="GO:0006310">
    <property type="term" value="P:DNA recombination"/>
    <property type="evidence" value="ECO:0007669"/>
    <property type="project" value="UniProtKB-UniRule"/>
</dbReference>
<dbReference type="GO" id="GO:0006281">
    <property type="term" value="P:DNA repair"/>
    <property type="evidence" value="ECO:0007669"/>
    <property type="project" value="UniProtKB-UniRule"/>
</dbReference>
<dbReference type="GO" id="GO:0006260">
    <property type="term" value="P:DNA replication"/>
    <property type="evidence" value="ECO:0000318"/>
    <property type="project" value="GO_Central"/>
</dbReference>
<dbReference type="CDD" id="cd04496">
    <property type="entry name" value="SSB_OBF"/>
    <property type="match status" value="1"/>
</dbReference>
<dbReference type="Gene3D" id="2.40.50.140">
    <property type="entry name" value="Nucleic acid-binding proteins"/>
    <property type="match status" value="1"/>
</dbReference>
<dbReference type="HAMAP" id="MF_00984">
    <property type="entry name" value="SSB"/>
    <property type="match status" value="1"/>
</dbReference>
<dbReference type="InterPro" id="IPR012340">
    <property type="entry name" value="NA-bd_OB-fold"/>
</dbReference>
<dbReference type="InterPro" id="IPR000424">
    <property type="entry name" value="Primosome_PriB/ssb"/>
</dbReference>
<dbReference type="InterPro" id="IPR011344">
    <property type="entry name" value="ssDNA-bd"/>
</dbReference>
<dbReference type="NCBIfam" id="NF006445">
    <property type="entry name" value="PRK08763.1"/>
    <property type="match status" value="1"/>
</dbReference>
<dbReference type="NCBIfam" id="TIGR00621">
    <property type="entry name" value="ssb"/>
    <property type="match status" value="1"/>
</dbReference>
<dbReference type="PANTHER" id="PTHR10302">
    <property type="entry name" value="SINGLE-STRANDED DNA-BINDING PROTEIN"/>
    <property type="match status" value="1"/>
</dbReference>
<dbReference type="PANTHER" id="PTHR10302:SF27">
    <property type="entry name" value="SINGLE-STRANDED DNA-BINDING PROTEIN"/>
    <property type="match status" value="1"/>
</dbReference>
<dbReference type="Pfam" id="PF00436">
    <property type="entry name" value="SSB"/>
    <property type="match status" value="1"/>
</dbReference>
<dbReference type="SUPFAM" id="SSF50249">
    <property type="entry name" value="Nucleic acid-binding proteins"/>
    <property type="match status" value="1"/>
</dbReference>
<dbReference type="PROSITE" id="PS50935">
    <property type="entry name" value="SSB"/>
    <property type="match status" value="1"/>
</dbReference>
<keyword id="KW-0227">DNA damage</keyword>
<keyword id="KW-0233">DNA recombination</keyword>
<keyword id="KW-0234">DNA repair</keyword>
<keyword id="KW-0235">DNA replication</keyword>
<keyword id="KW-0238">DNA-binding</keyword>
<keyword id="KW-1185">Reference proteome</keyword>
<gene>
    <name type="primary">ssb</name>
    <name type="ordered locus">XCC2735</name>
</gene>
<reference key="1">
    <citation type="journal article" date="2002" name="Nature">
        <title>Comparison of the genomes of two Xanthomonas pathogens with differing host specificities.</title>
        <authorList>
            <person name="da Silva A.C.R."/>
            <person name="Ferro J.A."/>
            <person name="Reinach F.C."/>
            <person name="Farah C.S."/>
            <person name="Furlan L.R."/>
            <person name="Quaggio R.B."/>
            <person name="Monteiro-Vitorello C.B."/>
            <person name="Van Sluys M.A."/>
            <person name="Almeida N.F. Jr."/>
            <person name="Alves L.M.C."/>
            <person name="do Amaral A.M."/>
            <person name="Bertolini M.C."/>
            <person name="Camargo L.E.A."/>
            <person name="Camarotte G."/>
            <person name="Cannavan F."/>
            <person name="Cardozo J."/>
            <person name="Chambergo F."/>
            <person name="Ciapina L.P."/>
            <person name="Cicarelli R.M.B."/>
            <person name="Coutinho L.L."/>
            <person name="Cursino-Santos J.R."/>
            <person name="El-Dorry H."/>
            <person name="Faria J.B."/>
            <person name="Ferreira A.J.S."/>
            <person name="Ferreira R.C.C."/>
            <person name="Ferro M.I.T."/>
            <person name="Formighieri E.F."/>
            <person name="Franco M.C."/>
            <person name="Greggio C.C."/>
            <person name="Gruber A."/>
            <person name="Katsuyama A.M."/>
            <person name="Kishi L.T."/>
            <person name="Leite R.P."/>
            <person name="Lemos E.G.M."/>
            <person name="Lemos M.V.F."/>
            <person name="Locali E.C."/>
            <person name="Machado M.A."/>
            <person name="Madeira A.M.B.N."/>
            <person name="Martinez-Rossi N.M."/>
            <person name="Martins E.C."/>
            <person name="Meidanis J."/>
            <person name="Menck C.F.M."/>
            <person name="Miyaki C.Y."/>
            <person name="Moon D.H."/>
            <person name="Moreira L.M."/>
            <person name="Novo M.T.M."/>
            <person name="Okura V.K."/>
            <person name="Oliveira M.C."/>
            <person name="Oliveira V.R."/>
            <person name="Pereira H.A."/>
            <person name="Rossi A."/>
            <person name="Sena J.A.D."/>
            <person name="Silva C."/>
            <person name="de Souza R.F."/>
            <person name="Spinola L.A.F."/>
            <person name="Takita M.A."/>
            <person name="Tamura R.E."/>
            <person name="Teixeira E.C."/>
            <person name="Tezza R.I.D."/>
            <person name="Trindade dos Santos M."/>
            <person name="Truffi D."/>
            <person name="Tsai S.M."/>
            <person name="White F.F."/>
            <person name="Setubal J.C."/>
            <person name="Kitajima J.P."/>
        </authorList>
    </citation>
    <scope>NUCLEOTIDE SEQUENCE [LARGE SCALE GENOMIC DNA]</scope>
    <source>
        <strain>ATCC 33913 / DSM 3586 / NCPPB 528 / LMG 568 / P 25</strain>
    </source>
</reference>
<accession>Q8P778</accession>